<proteinExistence type="inferred from homology"/>
<reference key="1">
    <citation type="journal article" date="2005" name="J. Bacteriol.">
        <title>Insights on evolution of virulence and resistance from the complete genome analysis of an early methicillin-resistant Staphylococcus aureus strain and a biofilm-producing methicillin-resistant Staphylococcus epidermidis strain.</title>
        <authorList>
            <person name="Gill S.R."/>
            <person name="Fouts D.E."/>
            <person name="Archer G.L."/>
            <person name="Mongodin E.F."/>
            <person name="DeBoy R.T."/>
            <person name="Ravel J."/>
            <person name="Paulsen I.T."/>
            <person name="Kolonay J.F."/>
            <person name="Brinkac L.M."/>
            <person name="Beanan M.J."/>
            <person name="Dodson R.J."/>
            <person name="Daugherty S.C."/>
            <person name="Madupu R."/>
            <person name="Angiuoli S.V."/>
            <person name="Durkin A.S."/>
            <person name="Haft D.H."/>
            <person name="Vamathevan J.J."/>
            <person name="Khouri H."/>
            <person name="Utterback T.R."/>
            <person name="Lee C."/>
            <person name="Dimitrov G."/>
            <person name="Jiang L."/>
            <person name="Qin H."/>
            <person name="Weidman J."/>
            <person name="Tran K."/>
            <person name="Kang K.H."/>
            <person name="Hance I.R."/>
            <person name="Nelson K.E."/>
            <person name="Fraser C.M."/>
        </authorList>
    </citation>
    <scope>NUCLEOTIDE SEQUENCE [LARGE SCALE GENOMIC DNA]</scope>
    <source>
        <strain>ATCC 35984 / DSM 28319 / BCRC 17069 / CCUG 31568 / BM 3577 / RP62A</strain>
    </source>
</reference>
<dbReference type="EC" id="2.7.11.-" evidence="1"/>
<dbReference type="EC" id="2.7.4.-" evidence="1"/>
<dbReference type="EMBL" id="CP000029">
    <property type="protein sequence ID" value="AAW53842.1"/>
    <property type="molecule type" value="Genomic_DNA"/>
</dbReference>
<dbReference type="RefSeq" id="WP_001829649.1">
    <property type="nucleotide sequence ID" value="NC_002976.3"/>
</dbReference>
<dbReference type="SMR" id="Q5HQW8"/>
<dbReference type="STRING" id="176279.SERP0428"/>
<dbReference type="GeneID" id="50019310"/>
<dbReference type="KEGG" id="ser:SERP0428"/>
<dbReference type="eggNOG" id="COG1493">
    <property type="taxonomic scope" value="Bacteria"/>
</dbReference>
<dbReference type="HOGENOM" id="CLU_052030_0_1_9"/>
<dbReference type="Proteomes" id="UP000000531">
    <property type="component" value="Chromosome"/>
</dbReference>
<dbReference type="GO" id="GO:0005524">
    <property type="term" value="F:ATP binding"/>
    <property type="evidence" value="ECO:0007669"/>
    <property type="project" value="UniProtKB-UniRule"/>
</dbReference>
<dbReference type="GO" id="GO:0000287">
    <property type="term" value="F:magnesium ion binding"/>
    <property type="evidence" value="ECO:0007669"/>
    <property type="project" value="UniProtKB-UniRule"/>
</dbReference>
<dbReference type="GO" id="GO:0000155">
    <property type="term" value="F:phosphorelay sensor kinase activity"/>
    <property type="evidence" value="ECO:0007669"/>
    <property type="project" value="InterPro"/>
</dbReference>
<dbReference type="GO" id="GO:0004674">
    <property type="term" value="F:protein serine/threonine kinase activity"/>
    <property type="evidence" value="ECO:0007669"/>
    <property type="project" value="UniProtKB-KW"/>
</dbReference>
<dbReference type="GO" id="GO:0004712">
    <property type="term" value="F:protein serine/threonine/tyrosine kinase activity"/>
    <property type="evidence" value="ECO:0007669"/>
    <property type="project" value="UniProtKB-UniRule"/>
</dbReference>
<dbReference type="GO" id="GO:0006109">
    <property type="term" value="P:regulation of carbohydrate metabolic process"/>
    <property type="evidence" value="ECO:0007669"/>
    <property type="project" value="UniProtKB-UniRule"/>
</dbReference>
<dbReference type="CDD" id="cd01918">
    <property type="entry name" value="HprK_C"/>
    <property type="match status" value="1"/>
</dbReference>
<dbReference type="FunFam" id="3.40.1390.20:FF:000002">
    <property type="entry name" value="HPr kinase/phosphorylase"/>
    <property type="match status" value="1"/>
</dbReference>
<dbReference type="FunFam" id="3.40.50.300:FF:000174">
    <property type="entry name" value="HPr kinase/phosphorylase"/>
    <property type="match status" value="1"/>
</dbReference>
<dbReference type="Gene3D" id="3.40.1390.20">
    <property type="entry name" value="HprK N-terminal domain-like"/>
    <property type="match status" value="1"/>
</dbReference>
<dbReference type="Gene3D" id="3.40.50.300">
    <property type="entry name" value="P-loop containing nucleotide triphosphate hydrolases"/>
    <property type="match status" value="1"/>
</dbReference>
<dbReference type="HAMAP" id="MF_01249">
    <property type="entry name" value="HPr_kinase"/>
    <property type="match status" value="1"/>
</dbReference>
<dbReference type="InterPro" id="IPR003755">
    <property type="entry name" value="HPr(Ser)_kin/Pase"/>
</dbReference>
<dbReference type="InterPro" id="IPR011104">
    <property type="entry name" value="Hpr_kin/Pase_C"/>
</dbReference>
<dbReference type="InterPro" id="IPR011126">
    <property type="entry name" value="Hpr_kin/Pase_Hpr_N"/>
</dbReference>
<dbReference type="InterPro" id="IPR027417">
    <property type="entry name" value="P-loop_NTPase"/>
</dbReference>
<dbReference type="InterPro" id="IPR028979">
    <property type="entry name" value="Ser_kin/Pase_Hpr-like_N_sf"/>
</dbReference>
<dbReference type="NCBIfam" id="TIGR00679">
    <property type="entry name" value="hpr-ser"/>
    <property type="match status" value="1"/>
</dbReference>
<dbReference type="PANTHER" id="PTHR30305:SF1">
    <property type="entry name" value="HPR KINASE_PHOSPHORYLASE"/>
    <property type="match status" value="1"/>
</dbReference>
<dbReference type="PANTHER" id="PTHR30305">
    <property type="entry name" value="PROTEIN YJDM-RELATED"/>
    <property type="match status" value="1"/>
</dbReference>
<dbReference type="Pfam" id="PF07475">
    <property type="entry name" value="Hpr_kinase_C"/>
    <property type="match status" value="1"/>
</dbReference>
<dbReference type="Pfam" id="PF02603">
    <property type="entry name" value="Hpr_kinase_N"/>
    <property type="match status" value="1"/>
</dbReference>
<dbReference type="SUPFAM" id="SSF75138">
    <property type="entry name" value="HprK N-terminal domain-like"/>
    <property type="match status" value="1"/>
</dbReference>
<dbReference type="SUPFAM" id="SSF53795">
    <property type="entry name" value="PEP carboxykinase-like"/>
    <property type="match status" value="1"/>
</dbReference>
<gene>
    <name evidence="1" type="primary">hprK</name>
    <name type="ordered locus">SERP0428</name>
</gene>
<comment type="function">
    <text evidence="1">Catalyzes the ATP- as well as the pyrophosphate-dependent phosphorylation of a specific serine residue in HPr, a phosphocarrier protein of the phosphoenolpyruvate-dependent sugar phosphotransferase system (PTS). HprK/P also catalyzes the pyrophosphate-producing, inorganic phosphate-dependent dephosphorylation (phosphorolysis) of seryl-phosphorylated HPr (P-Ser-HPr). The two antagonistic activities of HprK/P are regulated by several intracellular metabolites, which change their concentration in response to the absence or presence of rapidly metabolisable carbon sources (glucose, fructose, etc.) in the growth medium. Therefore, by controlling the phosphorylation state of HPr, HPrK/P is a sensor enzyme that plays a major role in the regulation of carbon metabolism and sugar transport: it mediates carbon catabolite repression (CCR), and regulates PTS-catalyzed carbohydrate uptake and inducer exclusion.</text>
</comment>
<comment type="catalytic activity">
    <reaction evidence="1">
        <text>[HPr protein]-L-serine + ATP = [HPr protein]-O-phospho-L-serine + ADP + H(+)</text>
        <dbReference type="Rhea" id="RHEA:46600"/>
        <dbReference type="Rhea" id="RHEA-COMP:11602"/>
        <dbReference type="Rhea" id="RHEA-COMP:11603"/>
        <dbReference type="ChEBI" id="CHEBI:15378"/>
        <dbReference type="ChEBI" id="CHEBI:29999"/>
        <dbReference type="ChEBI" id="CHEBI:30616"/>
        <dbReference type="ChEBI" id="CHEBI:83421"/>
        <dbReference type="ChEBI" id="CHEBI:456216"/>
    </reaction>
</comment>
<comment type="catalytic activity">
    <reaction evidence="1">
        <text>[HPr protein]-O-phospho-L-serine + phosphate + H(+) = [HPr protein]-L-serine + diphosphate</text>
        <dbReference type="Rhea" id="RHEA:46604"/>
        <dbReference type="Rhea" id="RHEA-COMP:11602"/>
        <dbReference type="Rhea" id="RHEA-COMP:11603"/>
        <dbReference type="ChEBI" id="CHEBI:15378"/>
        <dbReference type="ChEBI" id="CHEBI:29999"/>
        <dbReference type="ChEBI" id="CHEBI:33019"/>
        <dbReference type="ChEBI" id="CHEBI:43474"/>
        <dbReference type="ChEBI" id="CHEBI:83421"/>
    </reaction>
</comment>
<comment type="cofactor">
    <cofactor evidence="1">
        <name>Mg(2+)</name>
        <dbReference type="ChEBI" id="CHEBI:18420"/>
    </cofactor>
</comment>
<comment type="subunit">
    <text evidence="1">Homohexamer.</text>
</comment>
<comment type="domain">
    <text evidence="1">The Walker A ATP-binding motif also binds Pi and PPi.</text>
</comment>
<comment type="miscellaneous">
    <text evidence="1">Both phosphorylation and phosphorolysis are carried out by the same active site and suggest a common mechanism for both reactions.</text>
</comment>
<comment type="similarity">
    <text evidence="1">Belongs to the HPrK/P family.</text>
</comment>
<protein>
    <recommendedName>
        <fullName evidence="1">HPr kinase/phosphorylase</fullName>
        <shortName evidence="1">HPrK/P</shortName>
        <ecNumber evidence="1">2.7.11.-</ecNumber>
        <ecNumber evidence="1">2.7.4.-</ecNumber>
    </recommendedName>
    <alternativeName>
        <fullName evidence="1">HPr(Ser) kinase/phosphorylase</fullName>
    </alternativeName>
</protein>
<accession>Q5HQW8</accession>
<evidence type="ECO:0000255" key="1">
    <source>
        <dbReference type="HAMAP-Rule" id="MF_01249"/>
    </source>
</evidence>
<feature type="chain" id="PRO_0000058988" description="HPr kinase/phosphorylase">
    <location>
        <begin position="1"/>
        <end position="310"/>
    </location>
</feature>
<feature type="region of interest" description="Important for the catalytic mechanism of both phosphorylation and dephosphorylation" evidence="1">
    <location>
        <begin position="199"/>
        <end position="208"/>
    </location>
</feature>
<feature type="region of interest" description="Important for the catalytic mechanism of dephosphorylation" evidence="1">
    <location>
        <begin position="262"/>
        <end position="267"/>
    </location>
</feature>
<feature type="active site" evidence="1">
    <location>
        <position position="136"/>
    </location>
</feature>
<feature type="active site" evidence="1">
    <location>
        <position position="157"/>
    </location>
</feature>
<feature type="active site" description="Proton acceptor; for phosphorylation activity. Proton donor; for dephosphorylation activity" evidence="1">
    <location>
        <position position="175"/>
    </location>
</feature>
<feature type="active site" evidence="1">
    <location>
        <position position="241"/>
    </location>
</feature>
<feature type="binding site" evidence="1">
    <location>
        <begin position="151"/>
        <end position="158"/>
    </location>
    <ligand>
        <name>ATP</name>
        <dbReference type="ChEBI" id="CHEBI:30616"/>
    </ligand>
</feature>
<feature type="binding site" evidence="1">
    <location>
        <position position="158"/>
    </location>
    <ligand>
        <name>Mg(2+)</name>
        <dbReference type="ChEBI" id="CHEBI:18420"/>
    </ligand>
</feature>
<feature type="binding site" evidence="1">
    <location>
        <position position="200"/>
    </location>
    <ligand>
        <name>Mg(2+)</name>
        <dbReference type="ChEBI" id="CHEBI:18420"/>
    </ligand>
</feature>
<keyword id="KW-0067">ATP-binding</keyword>
<keyword id="KW-0119">Carbohydrate metabolism</keyword>
<keyword id="KW-0418">Kinase</keyword>
<keyword id="KW-0460">Magnesium</keyword>
<keyword id="KW-0479">Metal-binding</keyword>
<keyword id="KW-0511">Multifunctional enzyme</keyword>
<keyword id="KW-0547">Nucleotide-binding</keyword>
<keyword id="KW-1185">Reference proteome</keyword>
<keyword id="KW-0723">Serine/threonine-protein kinase</keyword>
<keyword id="KW-0808">Transferase</keyword>
<sequence>MLTTDRLVNTLNLELLTGEEGLDRPIKNTDISRPGLEMAGYFSHYASDRIQLLGTTELSFYNLLPDEEKKGRMRKLCRPETPAIIVTRGLEPPEELIQASQETHTPIIVAKDATTSLMSRLTTFLEHELAKTTSLHGVLVDVYGVGVLITGDSGIGKSETALELVKRGHRLVADDNVEIKEITKDELVGKPPKLIEHLLEIRGLGIINVMTLFGAGSILTEKQIRLNINLENWNKNKLYDRVGLNEETLKILDTEITKKTIPVRPGRNVAVIIEVAAMNYRLNIMGINTAVEFNERLNEEIVRNSHKSEE</sequence>
<name>HPRK_STAEQ</name>
<organism>
    <name type="scientific">Staphylococcus epidermidis (strain ATCC 35984 / DSM 28319 / BCRC 17069 / CCUG 31568 / BM 3577 / RP62A)</name>
    <dbReference type="NCBI Taxonomy" id="176279"/>
    <lineage>
        <taxon>Bacteria</taxon>
        <taxon>Bacillati</taxon>
        <taxon>Bacillota</taxon>
        <taxon>Bacilli</taxon>
        <taxon>Bacillales</taxon>
        <taxon>Staphylococcaceae</taxon>
        <taxon>Staphylococcus</taxon>
    </lineage>
</organism>